<accession>B2SGS9</accession>
<feature type="chain" id="PRO_1000114613" description="Nucleoid-associated protein FTM_1023">
    <location>
        <begin position="1"/>
        <end position="112"/>
    </location>
</feature>
<sequence>MNFDMSKLVQQAQKMQEQMKKAQQERENMEVIGESGAGLVTVTMTGKYDVKSVSIDNSLMSEDKEILEDLIAAAVNSAVKKVEENSTASSDIYKMAKDAGIDLPSGINFPFK</sequence>
<protein>
    <recommendedName>
        <fullName evidence="1">Nucleoid-associated protein FTM_1023</fullName>
    </recommendedName>
</protein>
<dbReference type="EMBL" id="CP000915">
    <property type="protein sequence ID" value="ACD30937.1"/>
    <property type="molecule type" value="Genomic_DNA"/>
</dbReference>
<dbReference type="SMR" id="B2SGS9"/>
<dbReference type="KEGG" id="ftm:FTM_1023"/>
<dbReference type="HOGENOM" id="CLU_140930_0_0_6"/>
<dbReference type="GO" id="GO:0043590">
    <property type="term" value="C:bacterial nucleoid"/>
    <property type="evidence" value="ECO:0007669"/>
    <property type="project" value="UniProtKB-UniRule"/>
</dbReference>
<dbReference type="GO" id="GO:0005829">
    <property type="term" value="C:cytosol"/>
    <property type="evidence" value="ECO:0007669"/>
    <property type="project" value="TreeGrafter"/>
</dbReference>
<dbReference type="GO" id="GO:0003677">
    <property type="term" value="F:DNA binding"/>
    <property type="evidence" value="ECO:0007669"/>
    <property type="project" value="UniProtKB-UniRule"/>
</dbReference>
<dbReference type="Gene3D" id="3.30.1310.10">
    <property type="entry name" value="Nucleoid-associated protein YbaB-like domain"/>
    <property type="match status" value="1"/>
</dbReference>
<dbReference type="HAMAP" id="MF_00274">
    <property type="entry name" value="DNA_YbaB_EbfC"/>
    <property type="match status" value="1"/>
</dbReference>
<dbReference type="InterPro" id="IPR036894">
    <property type="entry name" value="YbaB-like_sf"/>
</dbReference>
<dbReference type="InterPro" id="IPR004401">
    <property type="entry name" value="YbaB/EbfC"/>
</dbReference>
<dbReference type="NCBIfam" id="TIGR00103">
    <property type="entry name" value="DNA_YbaB_EbfC"/>
    <property type="match status" value="1"/>
</dbReference>
<dbReference type="PANTHER" id="PTHR33449">
    <property type="entry name" value="NUCLEOID-ASSOCIATED PROTEIN YBAB"/>
    <property type="match status" value="1"/>
</dbReference>
<dbReference type="PANTHER" id="PTHR33449:SF1">
    <property type="entry name" value="NUCLEOID-ASSOCIATED PROTEIN YBAB"/>
    <property type="match status" value="1"/>
</dbReference>
<dbReference type="Pfam" id="PF02575">
    <property type="entry name" value="YbaB_DNA_bd"/>
    <property type="match status" value="1"/>
</dbReference>
<dbReference type="PIRSF" id="PIRSF004555">
    <property type="entry name" value="UCP004555"/>
    <property type="match status" value="1"/>
</dbReference>
<dbReference type="SUPFAM" id="SSF82607">
    <property type="entry name" value="YbaB-like"/>
    <property type="match status" value="1"/>
</dbReference>
<name>Y1023_FRATM</name>
<gene>
    <name type="ordered locus">FTM_1023</name>
</gene>
<evidence type="ECO:0000255" key="1">
    <source>
        <dbReference type="HAMAP-Rule" id="MF_00274"/>
    </source>
</evidence>
<organism>
    <name type="scientific">Francisella tularensis subsp. mediasiatica (strain FSC147)</name>
    <dbReference type="NCBI Taxonomy" id="441952"/>
    <lineage>
        <taxon>Bacteria</taxon>
        <taxon>Pseudomonadati</taxon>
        <taxon>Pseudomonadota</taxon>
        <taxon>Gammaproteobacteria</taxon>
        <taxon>Thiotrichales</taxon>
        <taxon>Francisellaceae</taxon>
        <taxon>Francisella</taxon>
    </lineage>
</organism>
<keyword id="KW-0963">Cytoplasm</keyword>
<keyword id="KW-0238">DNA-binding</keyword>
<comment type="function">
    <text evidence="1">Binds to DNA and alters its conformation. May be involved in regulation of gene expression, nucleoid organization and DNA protection.</text>
</comment>
<comment type="subunit">
    <text evidence="1">Homodimer.</text>
</comment>
<comment type="subcellular location">
    <subcellularLocation>
        <location evidence="1">Cytoplasm</location>
        <location evidence="1">Nucleoid</location>
    </subcellularLocation>
</comment>
<comment type="similarity">
    <text evidence="1">Belongs to the YbaB/EbfC family.</text>
</comment>
<reference key="1">
    <citation type="journal article" date="2009" name="PLoS Pathog.">
        <title>Molecular evolutionary consequences of niche restriction in Francisella tularensis, a facultative intracellular pathogen.</title>
        <authorList>
            <person name="Larsson P."/>
            <person name="Elfsmark D."/>
            <person name="Svensson K."/>
            <person name="Wikstroem P."/>
            <person name="Forsman M."/>
            <person name="Brettin T."/>
            <person name="Keim P."/>
            <person name="Johansson A."/>
        </authorList>
    </citation>
    <scope>NUCLEOTIDE SEQUENCE [LARGE SCALE GENOMIC DNA]</scope>
    <source>
        <strain>FSC147</strain>
    </source>
</reference>
<proteinExistence type="inferred from homology"/>